<sequence length="142" mass="15866">MSANTQDNQANNNDTIEIQETEVVPVETNSLQSGLTSLTPMVLIFAVFYFLLLRPQEKRRKEREKLVSEVKKGEEVLTNSGIYGIVTKVSENDNNIEIEIAKDVRIKALKSAIVDITSRTKEVAVKKENNKKDKKVSGAKSS</sequence>
<protein>
    <recommendedName>
        <fullName>Sec translocon accessory complex subunit YajC</fullName>
    </recommendedName>
</protein>
<gene>
    <name type="primary">yajC</name>
    <name type="ordered locus">RF_0958</name>
</gene>
<proteinExistence type="inferred from homology"/>
<comment type="function">
    <text evidence="1">The SecYEG-SecDF-YajC-YidC holo-translocon (HTL) protein secretase/insertase is a supercomplex required for protein secretion, insertion of proteins into membranes, and assembly of membrane protein complexes. While the SecYEG complex is essential for assembly of a number of proteins and complexes, the SecDF-YajC-YidC subcomplex facilitates these functions.</text>
</comment>
<comment type="subunit">
    <text evidence="1">Part of the SecDF-YidC-YajC translocase complex. The SecDF-YidC-YajC translocase forms a supercomplex with SecYEG, called the holo-translocon (HTL).</text>
</comment>
<comment type="subcellular location">
    <subcellularLocation>
        <location evidence="1">Cell inner membrane</location>
        <topology evidence="1">Single-pass membrane protein</topology>
    </subcellularLocation>
</comment>
<comment type="similarity">
    <text evidence="3">Belongs to the YajC family.</text>
</comment>
<comment type="sequence caution" evidence="3">
    <conflict type="erroneous initiation">
        <sequence resource="EMBL-CDS" id="AAY61809"/>
    </conflict>
    <text>Extended N-terminus.</text>
</comment>
<keyword id="KW-0997">Cell inner membrane</keyword>
<keyword id="KW-1003">Cell membrane</keyword>
<keyword id="KW-0472">Membrane</keyword>
<keyword id="KW-0653">Protein transport</keyword>
<keyword id="KW-0811">Translocation</keyword>
<keyword id="KW-0812">Transmembrane</keyword>
<keyword id="KW-1133">Transmembrane helix</keyword>
<keyword id="KW-0813">Transport</keyword>
<reference key="1">
    <citation type="journal article" date="2005" name="PLoS Biol.">
        <title>The genome sequence of Rickettsia felis identifies the first putative conjugative plasmid in an obligate intracellular parasite.</title>
        <authorList>
            <person name="Ogata H."/>
            <person name="Renesto P."/>
            <person name="Audic S."/>
            <person name="Robert C."/>
            <person name="Blanc G."/>
            <person name="Fournier P.-E."/>
            <person name="Parinello H."/>
            <person name="Claverie J.-M."/>
            <person name="Raoult D."/>
        </authorList>
    </citation>
    <scope>NUCLEOTIDE SEQUENCE [LARGE SCALE GENOMIC DNA]</scope>
    <source>
        <strain>ATCC VR-1525 / URRWXCal2</strain>
    </source>
</reference>
<feature type="chain" id="PRO_0000282379" description="Sec translocon accessory complex subunit YajC">
    <location>
        <begin position="1"/>
        <end position="142"/>
    </location>
</feature>
<feature type="transmembrane region" description="Helical" evidence="2">
    <location>
        <begin position="33"/>
        <end position="53"/>
    </location>
</feature>
<dbReference type="EMBL" id="CP000053">
    <property type="protein sequence ID" value="AAY61809.1"/>
    <property type="status" value="ALT_INIT"/>
    <property type="molecule type" value="Genomic_DNA"/>
</dbReference>
<dbReference type="SMR" id="Q4UKW4"/>
<dbReference type="STRING" id="315456.RF_0958"/>
<dbReference type="KEGG" id="rfe:RF_0958"/>
<dbReference type="eggNOG" id="COG1862">
    <property type="taxonomic scope" value="Bacteria"/>
</dbReference>
<dbReference type="HOGENOM" id="CLU_116157_0_0_5"/>
<dbReference type="OrthoDB" id="9811406at2"/>
<dbReference type="Proteomes" id="UP000008548">
    <property type="component" value="Chromosome"/>
</dbReference>
<dbReference type="GO" id="GO:0005886">
    <property type="term" value="C:plasma membrane"/>
    <property type="evidence" value="ECO:0007669"/>
    <property type="project" value="UniProtKB-SubCell"/>
</dbReference>
<dbReference type="GO" id="GO:0015031">
    <property type="term" value="P:protein transport"/>
    <property type="evidence" value="ECO:0007669"/>
    <property type="project" value="UniProtKB-KW"/>
</dbReference>
<dbReference type="InterPro" id="IPR003849">
    <property type="entry name" value="Preprotein_translocase_YajC"/>
</dbReference>
<dbReference type="NCBIfam" id="TIGR00739">
    <property type="entry name" value="yajC"/>
    <property type="match status" value="1"/>
</dbReference>
<dbReference type="PANTHER" id="PTHR33909">
    <property type="entry name" value="SEC TRANSLOCON ACCESSORY COMPLEX SUBUNIT YAJC"/>
    <property type="match status" value="1"/>
</dbReference>
<dbReference type="PANTHER" id="PTHR33909:SF1">
    <property type="entry name" value="SEC TRANSLOCON ACCESSORY COMPLEX SUBUNIT YAJC"/>
    <property type="match status" value="1"/>
</dbReference>
<dbReference type="Pfam" id="PF02699">
    <property type="entry name" value="YajC"/>
    <property type="match status" value="1"/>
</dbReference>
<dbReference type="PRINTS" id="PR01853">
    <property type="entry name" value="YAJCTRNLCASE"/>
</dbReference>
<dbReference type="SMART" id="SM01323">
    <property type="entry name" value="YajC"/>
    <property type="match status" value="1"/>
</dbReference>
<accession>Q4UKW4</accession>
<evidence type="ECO:0000250" key="1">
    <source>
        <dbReference type="UniProtKB" id="P0ADZ7"/>
    </source>
</evidence>
<evidence type="ECO:0000255" key="2"/>
<evidence type="ECO:0000305" key="3"/>
<name>YAJC_RICFE</name>
<organism>
    <name type="scientific">Rickettsia felis (strain ATCC VR-1525 / URRWXCal2)</name>
    <name type="common">Rickettsia azadi</name>
    <dbReference type="NCBI Taxonomy" id="315456"/>
    <lineage>
        <taxon>Bacteria</taxon>
        <taxon>Pseudomonadati</taxon>
        <taxon>Pseudomonadota</taxon>
        <taxon>Alphaproteobacteria</taxon>
        <taxon>Rickettsiales</taxon>
        <taxon>Rickettsiaceae</taxon>
        <taxon>Rickettsieae</taxon>
        <taxon>Rickettsia</taxon>
        <taxon>spotted fever group</taxon>
    </lineage>
</organism>